<sequence length="550" mass="59921">MMPRAQLTTFLIVTSFLSTVPYLRAPVHGGVLTSYDVSSLDIMSKIHTDHDATTKASSDFGHIVHATPNGVFRPTFPADIAALIRLSLSQPTPFTVAPRGKGHSSRGQAFAPGGIVVDMSALGDHGHHTSHRIDVSVDRMYVDAGGEQLWIDVLHTALKHGLTPRVWTDYLRITVGGTLSNAGIGGQAFRHGPQISNVHELDVVTGMGEMITCSPEVNSALFFAVLGGLGQFGVITRARIRLEPAPKRVKWVRIAYSDVHPFTTDQELLISKWASGSGFDYVEGQVQLNRTLTQGRRSSSFFSATDLARLTGLAIDTGSVAIYYIEGAMYYDDNTAASVDQKLDALLEELSFVRGFVFVRDASYVEFLDRVGREEQNLRSAGAWDVPHPWLNLFVPRSRILHFDAAVFKGILRNANPVGLILMYPMNKDMWDDRMTAMTPDEDVFYAVGLLRSAVAGGSGGDVEQLERENAAVLELCDLAGGGIGCRQYLPHHASRDGWRRHFGAKWGRVADLKARYDPRAILSPGQGIFPPPPPPSPPPPAAGEPITAS</sequence>
<keyword id="KW-0274">FAD</keyword>
<keyword id="KW-0285">Flavoprotein</keyword>
<keyword id="KW-0325">Glycoprotein</keyword>
<keyword id="KW-0560">Oxidoreductase</keyword>
<keyword id="KW-1185">Reference proteome</keyword>
<keyword id="KW-0964">Secreted</keyword>
<keyword id="KW-0732">Signal</keyword>
<protein>
    <recommendedName>
        <fullName>Cytokinin dehydrogenase 10</fullName>
        <ecNumber evidence="3">1.5.99.12</ecNumber>
    </recommendedName>
    <alternativeName>
        <fullName>Cytokinin oxidase 10</fullName>
        <shortName>OsCKX10</shortName>
    </alternativeName>
</protein>
<evidence type="ECO:0000250" key="1"/>
<evidence type="ECO:0000250" key="2">
    <source>
        <dbReference type="UniProtKB" id="Q6Z955"/>
    </source>
</evidence>
<evidence type="ECO:0000250" key="3">
    <source>
        <dbReference type="UniProtKB" id="Q8LNV6"/>
    </source>
</evidence>
<evidence type="ECO:0000250" key="4">
    <source>
        <dbReference type="UniProtKB" id="Q9T0N8"/>
    </source>
</evidence>
<evidence type="ECO:0000255" key="5"/>
<evidence type="ECO:0000255" key="6">
    <source>
        <dbReference type="PROSITE-ProRule" id="PRU00718"/>
    </source>
</evidence>
<evidence type="ECO:0000256" key="7">
    <source>
        <dbReference type="SAM" id="MobiDB-lite"/>
    </source>
</evidence>
<evidence type="ECO:0000305" key="8"/>
<dbReference type="EC" id="1.5.99.12" evidence="3"/>
<dbReference type="EMBL" id="AP004729">
    <property type="protein sequence ID" value="BAD61835.1"/>
    <property type="molecule type" value="Genomic_DNA"/>
</dbReference>
<dbReference type="EMBL" id="AP005460">
    <property type="protein sequence ID" value="BAD61939.1"/>
    <property type="molecule type" value="Genomic_DNA"/>
</dbReference>
<dbReference type="EMBL" id="AP014962">
    <property type="status" value="NOT_ANNOTATED_CDS"/>
    <property type="molecule type" value="Genomic_DNA"/>
</dbReference>
<dbReference type="SMR" id="Q5Z620"/>
<dbReference type="FunCoup" id="Q5Z620">
    <property type="interactions" value="99"/>
</dbReference>
<dbReference type="STRING" id="39947.Q5Z620"/>
<dbReference type="GlyCosmos" id="Q5Z620">
    <property type="glycosylation" value="1 site, No reported glycans"/>
</dbReference>
<dbReference type="PaxDb" id="39947-Q5Z620"/>
<dbReference type="eggNOG" id="KOG1231">
    <property type="taxonomic scope" value="Eukaryota"/>
</dbReference>
<dbReference type="InParanoid" id="Q5Z620"/>
<dbReference type="Proteomes" id="UP000000763">
    <property type="component" value="Chromosome 6"/>
</dbReference>
<dbReference type="Proteomes" id="UP000059680">
    <property type="component" value="Chromosome 6"/>
</dbReference>
<dbReference type="GO" id="GO:0005576">
    <property type="term" value="C:extracellular region"/>
    <property type="evidence" value="ECO:0007669"/>
    <property type="project" value="UniProtKB-SubCell"/>
</dbReference>
<dbReference type="GO" id="GO:0019139">
    <property type="term" value="F:cytokinin dehydrogenase activity"/>
    <property type="evidence" value="ECO:0007669"/>
    <property type="project" value="UniProtKB-EC"/>
</dbReference>
<dbReference type="GO" id="GO:0071949">
    <property type="term" value="F:FAD binding"/>
    <property type="evidence" value="ECO:0007669"/>
    <property type="project" value="InterPro"/>
</dbReference>
<dbReference type="GO" id="GO:0016491">
    <property type="term" value="F:oxidoreductase activity"/>
    <property type="evidence" value="ECO:0000318"/>
    <property type="project" value="GO_Central"/>
</dbReference>
<dbReference type="GO" id="GO:0009690">
    <property type="term" value="P:cytokinin metabolic process"/>
    <property type="evidence" value="ECO:0007669"/>
    <property type="project" value="InterPro"/>
</dbReference>
<dbReference type="Gene3D" id="3.30.465.10">
    <property type="match status" value="1"/>
</dbReference>
<dbReference type="Gene3D" id="3.40.462.10">
    <property type="entry name" value="FAD-linked oxidases, C-terminal domain"/>
    <property type="match status" value="1"/>
</dbReference>
<dbReference type="Gene3D" id="3.30.43.10">
    <property type="entry name" value="Uridine Diphospho-n-acetylenolpyruvylglucosamine Reductase, domain 2"/>
    <property type="match status" value="1"/>
</dbReference>
<dbReference type="InterPro" id="IPR016170">
    <property type="entry name" value="Cytok_DH_C_sf"/>
</dbReference>
<dbReference type="InterPro" id="IPR015345">
    <property type="entry name" value="Cytokinin_DH_FAD/cytokin-bd"/>
</dbReference>
<dbReference type="InterPro" id="IPR016166">
    <property type="entry name" value="FAD-bd_PCMH"/>
</dbReference>
<dbReference type="InterPro" id="IPR036318">
    <property type="entry name" value="FAD-bd_PCMH-like_sf"/>
</dbReference>
<dbReference type="InterPro" id="IPR016167">
    <property type="entry name" value="FAD-bd_PCMH_sub1"/>
</dbReference>
<dbReference type="InterPro" id="IPR016169">
    <property type="entry name" value="FAD-bd_PCMH_sub2"/>
</dbReference>
<dbReference type="InterPro" id="IPR016164">
    <property type="entry name" value="FAD-linked_Oxase-like_C"/>
</dbReference>
<dbReference type="InterPro" id="IPR050432">
    <property type="entry name" value="FAD-linked_Oxidoreductases_BP"/>
</dbReference>
<dbReference type="InterPro" id="IPR006094">
    <property type="entry name" value="Oxid_FAD_bind_N"/>
</dbReference>
<dbReference type="PANTHER" id="PTHR13878:SF65">
    <property type="entry name" value="CYTOKININ DEHYDROGENASE 10"/>
    <property type="match status" value="1"/>
</dbReference>
<dbReference type="PANTHER" id="PTHR13878">
    <property type="entry name" value="GULONOLACTONE OXIDASE"/>
    <property type="match status" value="1"/>
</dbReference>
<dbReference type="Pfam" id="PF09265">
    <property type="entry name" value="Cytokin-bind"/>
    <property type="match status" value="1"/>
</dbReference>
<dbReference type="Pfam" id="PF01565">
    <property type="entry name" value="FAD_binding_4"/>
    <property type="match status" value="1"/>
</dbReference>
<dbReference type="SUPFAM" id="SSF56176">
    <property type="entry name" value="FAD-binding/transporter-associated domain-like"/>
    <property type="match status" value="1"/>
</dbReference>
<dbReference type="SUPFAM" id="SSF55103">
    <property type="entry name" value="FAD-linked oxidases, C-terminal domain"/>
    <property type="match status" value="1"/>
</dbReference>
<dbReference type="PROSITE" id="PS51387">
    <property type="entry name" value="FAD_PCMH"/>
    <property type="match status" value="1"/>
</dbReference>
<gene>
    <name type="primary">CKX10</name>
    <name type="ordered locus">Os06g0572300</name>
    <name type="ordered locus">LOC_Os06g37500</name>
    <name type="ORF">OSJNBa0006A22.17</name>
    <name type="ORF">P0610D01.25</name>
</gene>
<comment type="function">
    <text evidence="2">Catalyzes the oxidation of cytokinins, a family of N(6)-substituted adenine derivatives that are plant hormones, where the substituent is an isopentenyl group.</text>
</comment>
<comment type="catalytic activity">
    <reaction evidence="3">
        <text>N(6)-dimethylallyladenine + A + H2O = 3-methyl-2-butenal + adenine + AH2</text>
        <dbReference type="Rhea" id="RHEA:13625"/>
        <dbReference type="ChEBI" id="CHEBI:13193"/>
        <dbReference type="ChEBI" id="CHEBI:15377"/>
        <dbReference type="ChEBI" id="CHEBI:15825"/>
        <dbReference type="ChEBI" id="CHEBI:16708"/>
        <dbReference type="ChEBI" id="CHEBI:17499"/>
        <dbReference type="ChEBI" id="CHEBI:17660"/>
        <dbReference type="EC" id="1.5.99.12"/>
    </reaction>
</comment>
<comment type="cofactor">
    <cofactor evidence="3">
        <name>FAD</name>
        <dbReference type="ChEBI" id="CHEBI:57692"/>
    </cofactor>
</comment>
<comment type="subunit">
    <text evidence="1">Monomer.</text>
</comment>
<comment type="subcellular location">
    <subcellularLocation>
        <location evidence="1">Secreted</location>
        <location evidence="1">Extracellular space</location>
    </subcellularLocation>
</comment>
<comment type="similarity">
    <text evidence="8">Belongs to the oxygen-dependent FAD-linked oxidoreductase family.</text>
</comment>
<accession>Q5Z620</accession>
<name>CKX10_ORYSJ</name>
<organism>
    <name type="scientific">Oryza sativa subsp. japonica</name>
    <name type="common">Rice</name>
    <dbReference type="NCBI Taxonomy" id="39947"/>
    <lineage>
        <taxon>Eukaryota</taxon>
        <taxon>Viridiplantae</taxon>
        <taxon>Streptophyta</taxon>
        <taxon>Embryophyta</taxon>
        <taxon>Tracheophyta</taxon>
        <taxon>Spermatophyta</taxon>
        <taxon>Magnoliopsida</taxon>
        <taxon>Liliopsida</taxon>
        <taxon>Poales</taxon>
        <taxon>Poaceae</taxon>
        <taxon>BOP clade</taxon>
        <taxon>Oryzoideae</taxon>
        <taxon>Oryzeae</taxon>
        <taxon>Oryzinae</taxon>
        <taxon>Oryza</taxon>
        <taxon>Oryza sativa</taxon>
    </lineage>
</organism>
<proteinExistence type="inferred from homology"/>
<reference key="1">
    <citation type="journal article" date="2005" name="Nature">
        <title>The map-based sequence of the rice genome.</title>
        <authorList>
            <consortium name="International rice genome sequencing project (IRGSP)"/>
        </authorList>
    </citation>
    <scope>NUCLEOTIDE SEQUENCE [LARGE SCALE GENOMIC DNA]</scope>
    <source>
        <strain>cv. Nipponbare</strain>
    </source>
</reference>
<reference key="2">
    <citation type="journal article" date="2013" name="Rice">
        <title>Improvement of the Oryza sativa Nipponbare reference genome using next generation sequence and optical map data.</title>
        <authorList>
            <person name="Kawahara Y."/>
            <person name="de la Bastide M."/>
            <person name="Hamilton J.P."/>
            <person name="Kanamori H."/>
            <person name="McCombie W.R."/>
            <person name="Ouyang S."/>
            <person name="Schwartz D.C."/>
            <person name="Tanaka T."/>
            <person name="Wu J."/>
            <person name="Zhou S."/>
            <person name="Childs K.L."/>
            <person name="Davidson R.M."/>
            <person name="Lin H."/>
            <person name="Quesada-Ocampo L."/>
            <person name="Vaillancourt B."/>
            <person name="Sakai H."/>
            <person name="Lee S.S."/>
            <person name="Kim J."/>
            <person name="Numa H."/>
            <person name="Itoh T."/>
            <person name="Buell C.R."/>
            <person name="Matsumoto T."/>
        </authorList>
    </citation>
    <scope>GENOME REANNOTATION</scope>
    <source>
        <strain>cv. Nipponbare</strain>
    </source>
</reference>
<reference key="3">
    <citation type="journal article" date="2005" name="Science">
        <title>Cytokinin oxidase regulates rice grain production.</title>
        <authorList>
            <person name="Ashikari M."/>
            <person name="Sakakibara H."/>
            <person name="Lin S."/>
            <person name="Yamamoto T."/>
            <person name="Takashi T."/>
            <person name="Nishimura A."/>
            <person name="Angeles E.R."/>
            <person name="Qian Q."/>
            <person name="Kitano H."/>
            <person name="Matsuoka M."/>
        </authorList>
    </citation>
    <scope>GENE FAMILY</scope>
    <scope>NOMENCLATURE</scope>
    <source>
        <strain>cv. Koshihikari</strain>
    </source>
</reference>
<feature type="signal peptide" evidence="5">
    <location>
        <begin position="1"/>
        <end position="26"/>
    </location>
</feature>
<feature type="chain" id="PRO_0000394214" description="Cytokinin dehydrogenase 10">
    <location>
        <begin position="27"/>
        <end position="550"/>
    </location>
</feature>
<feature type="domain" description="FAD-binding PCMH-type" evidence="6">
    <location>
        <begin position="64"/>
        <end position="245"/>
    </location>
</feature>
<feature type="region of interest" description="Disordered" evidence="7">
    <location>
        <begin position="523"/>
        <end position="550"/>
    </location>
</feature>
<feature type="compositionally biased region" description="Pro residues" evidence="7">
    <location>
        <begin position="530"/>
        <end position="543"/>
    </location>
</feature>
<feature type="binding site" evidence="4">
    <location>
        <position position="100"/>
    </location>
    <ligand>
        <name>FAD</name>
        <dbReference type="ChEBI" id="CHEBI:57692"/>
    </ligand>
</feature>
<feature type="binding site" evidence="4">
    <location>
        <position position="101"/>
    </location>
    <ligand>
        <name>FAD</name>
        <dbReference type="ChEBI" id="CHEBI:57692"/>
    </ligand>
</feature>
<feature type="binding site" evidence="4">
    <location>
        <position position="102"/>
    </location>
    <ligand>
        <name>FAD</name>
        <dbReference type="ChEBI" id="CHEBI:57692"/>
    </ligand>
</feature>
<feature type="binding site" evidence="4">
    <location>
        <position position="104"/>
    </location>
    <ligand>
        <name>FAD</name>
        <dbReference type="ChEBI" id="CHEBI:57692"/>
    </ligand>
</feature>
<feature type="binding site" evidence="4">
    <location>
        <position position="108"/>
    </location>
    <ligand>
        <name>FAD</name>
        <dbReference type="ChEBI" id="CHEBI:57692"/>
    </ligand>
</feature>
<feature type="binding site" evidence="4">
    <location>
        <position position="169"/>
    </location>
    <ligand>
        <name>FAD</name>
        <dbReference type="ChEBI" id="CHEBI:57692"/>
    </ligand>
</feature>
<feature type="binding site" evidence="4">
    <location>
        <position position="174"/>
    </location>
    <ligand>
        <name>FAD</name>
        <dbReference type="ChEBI" id="CHEBI:57692"/>
    </ligand>
</feature>
<feature type="binding site" evidence="4">
    <location>
        <position position="180"/>
    </location>
    <ligand>
        <name>FAD</name>
        <dbReference type="ChEBI" id="CHEBI:57692"/>
    </ligand>
</feature>
<feature type="binding site" evidence="4">
    <location>
        <position position="184"/>
    </location>
    <ligand>
        <name>FAD</name>
        <dbReference type="ChEBI" id="CHEBI:57692"/>
    </ligand>
</feature>
<feature type="binding site" evidence="4">
    <location>
        <position position="235"/>
    </location>
    <ligand>
        <name>FAD</name>
        <dbReference type="ChEBI" id="CHEBI:57692"/>
    </ligand>
</feature>
<feature type="binding site" evidence="4">
    <location>
        <position position="489"/>
    </location>
    <ligand>
        <name>FAD</name>
        <dbReference type="ChEBI" id="CHEBI:57692"/>
    </ligand>
</feature>
<feature type="binding site" evidence="4">
    <location>
        <position position="524"/>
    </location>
    <ligand>
        <name>FAD</name>
        <dbReference type="ChEBI" id="CHEBI:57692"/>
    </ligand>
</feature>
<feature type="binding site" evidence="4">
    <location>
        <position position="527"/>
    </location>
    <ligand>
        <name>FAD</name>
        <dbReference type="ChEBI" id="CHEBI:57692"/>
    </ligand>
</feature>
<feature type="modified residue" description="Pros-8alpha-FAD histidine" evidence="4">
    <location>
        <position position="103"/>
    </location>
</feature>
<feature type="glycosylation site" description="N-linked (GlcNAc...) asparagine" evidence="5">
    <location>
        <position position="289"/>
    </location>
</feature>